<evidence type="ECO:0000255" key="1">
    <source>
        <dbReference type="HAMAP-Rule" id="MF_01216"/>
    </source>
</evidence>
<dbReference type="EC" id="1.6.5.-" evidence="1"/>
<dbReference type="EC" id="1.7.1.17" evidence="1"/>
<dbReference type="EMBL" id="CP000510">
    <property type="protein sequence ID" value="ABM03072.1"/>
    <property type="molecule type" value="Genomic_DNA"/>
</dbReference>
<dbReference type="RefSeq" id="WP_011769635.1">
    <property type="nucleotide sequence ID" value="NC_008709.1"/>
</dbReference>
<dbReference type="SMR" id="A1SUA7"/>
<dbReference type="STRING" id="357804.Ping_1242"/>
<dbReference type="KEGG" id="pin:Ping_1242"/>
<dbReference type="eggNOG" id="COG1182">
    <property type="taxonomic scope" value="Bacteria"/>
</dbReference>
<dbReference type="HOGENOM" id="CLU_088964_0_0_6"/>
<dbReference type="OrthoDB" id="9787136at2"/>
<dbReference type="Proteomes" id="UP000000639">
    <property type="component" value="Chromosome"/>
</dbReference>
<dbReference type="GO" id="GO:0009055">
    <property type="term" value="F:electron transfer activity"/>
    <property type="evidence" value="ECO:0007669"/>
    <property type="project" value="UniProtKB-UniRule"/>
</dbReference>
<dbReference type="GO" id="GO:0010181">
    <property type="term" value="F:FMN binding"/>
    <property type="evidence" value="ECO:0007669"/>
    <property type="project" value="UniProtKB-UniRule"/>
</dbReference>
<dbReference type="GO" id="GO:0016652">
    <property type="term" value="F:oxidoreductase activity, acting on NAD(P)H as acceptor"/>
    <property type="evidence" value="ECO:0007669"/>
    <property type="project" value="UniProtKB-UniRule"/>
</dbReference>
<dbReference type="GO" id="GO:0016655">
    <property type="term" value="F:oxidoreductase activity, acting on NAD(P)H, quinone or similar compound as acceptor"/>
    <property type="evidence" value="ECO:0007669"/>
    <property type="project" value="InterPro"/>
</dbReference>
<dbReference type="Gene3D" id="3.40.50.360">
    <property type="match status" value="1"/>
</dbReference>
<dbReference type="HAMAP" id="MF_01216">
    <property type="entry name" value="Azoreductase_type1"/>
    <property type="match status" value="1"/>
</dbReference>
<dbReference type="InterPro" id="IPR003680">
    <property type="entry name" value="Flavodoxin_fold"/>
</dbReference>
<dbReference type="InterPro" id="IPR029039">
    <property type="entry name" value="Flavoprotein-like_sf"/>
</dbReference>
<dbReference type="InterPro" id="IPR050104">
    <property type="entry name" value="FMN-dep_NADH:Q_OxRdtase_AzoR1"/>
</dbReference>
<dbReference type="InterPro" id="IPR023048">
    <property type="entry name" value="NADH:quinone_OxRdtase_FMN_depd"/>
</dbReference>
<dbReference type="PANTHER" id="PTHR43741">
    <property type="entry name" value="FMN-DEPENDENT NADH-AZOREDUCTASE 1"/>
    <property type="match status" value="1"/>
</dbReference>
<dbReference type="PANTHER" id="PTHR43741:SF2">
    <property type="entry name" value="FMN-DEPENDENT NADH:QUINONE OXIDOREDUCTASE"/>
    <property type="match status" value="1"/>
</dbReference>
<dbReference type="Pfam" id="PF02525">
    <property type="entry name" value="Flavodoxin_2"/>
    <property type="match status" value="1"/>
</dbReference>
<dbReference type="SUPFAM" id="SSF52218">
    <property type="entry name" value="Flavoproteins"/>
    <property type="match status" value="1"/>
</dbReference>
<keyword id="KW-0285">Flavoprotein</keyword>
<keyword id="KW-0288">FMN</keyword>
<keyword id="KW-0520">NAD</keyword>
<keyword id="KW-0560">Oxidoreductase</keyword>
<keyword id="KW-1185">Reference proteome</keyword>
<proteinExistence type="inferred from homology"/>
<protein>
    <recommendedName>
        <fullName evidence="1">FMN-dependent NADH:quinone oxidoreductase</fullName>
        <ecNumber evidence="1">1.6.5.-</ecNumber>
    </recommendedName>
    <alternativeName>
        <fullName evidence="1">Azo-dye reductase</fullName>
    </alternativeName>
    <alternativeName>
        <fullName evidence="1">FMN-dependent NADH-azo compound oxidoreductase</fullName>
    </alternativeName>
    <alternativeName>
        <fullName evidence="1">FMN-dependent NADH-azoreductase</fullName>
        <ecNumber evidence="1">1.7.1.17</ecNumber>
    </alternativeName>
</protein>
<accession>A1SUA7</accession>
<organism>
    <name type="scientific">Psychromonas ingrahamii (strain DSM 17664 / CCUG 51855 / 37)</name>
    <dbReference type="NCBI Taxonomy" id="357804"/>
    <lineage>
        <taxon>Bacteria</taxon>
        <taxon>Pseudomonadati</taxon>
        <taxon>Pseudomonadota</taxon>
        <taxon>Gammaproteobacteria</taxon>
        <taxon>Alteromonadales</taxon>
        <taxon>Psychromonadaceae</taxon>
        <taxon>Psychromonas</taxon>
    </lineage>
</organism>
<name>AZOR_PSYIN</name>
<feature type="chain" id="PRO_1000066516" description="FMN-dependent NADH:quinone oxidoreductase">
    <location>
        <begin position="1"/>
        <end position="206"/>
    </location>
</feature>
<feature type="binding site" evidence="1">
    <location>
        <position position="10"/>
    </location>
    <ligand>
        <name>FMN</name>
        <dbReference type="ChEBI" id="CHEBI:58210"/>
    </ligand>
</feature>
<feature type="binding site" evidence="1">
    <location>
        <begin position="16"/>
        <end position="18"/>
    </location>
    <ligand>
        <name>FMN</name>
        <dbReference type="ChEBI" id="CHEBI:58210"/>
    </ligand>
</feature>
<feature type="binding site" evidence="1">
    <location>
        <begin position="93"/>
        <end position="96"/>
    </location>
    <ligand>
        <name>FMN</name>
        <dbReference type="ChEBI" id="CHEBI:58210"/>
    </ligand>
</feature>
<feature type="binding site" evidence="1">
    <location>
        <begin position="137"/>
        <end position="140"/>
    </location>
    <ligand>
        <name>FMN</name>
        <dbReference type="ChEBI" id="CHEBI:58210"/>
    </ligand>
</feature>
<comment type="function">
    <text evidence="1">Quinone reductase that provides resistance to thiol-specific stress caused by electrophilic quinones.</text>
</comment>
<comment type="function">
    <text evidence="1">Also exhibits azoreductase activity. Catalyzes the reductive cleavage of the azo bond in aromatic azo compounds to the corresponding amines.</text>
</comment>
<comment type="catalytic activity">
    <reaction evidence="1">
        <text>2 a quinone + NADH + H(+) = 2 a 1,4-benzosemiquinone + NAD(+)</text>
        <dbReference type="Rhea" id="RHEA:65952"/>
        <dbReference type="ChEBI" id="CHEBI:15378"/>
        <dbReference type="ChEBI" id="CHEBI:57540"/>
        <dbReference type="ChEBI" id="CHEBI:57945"/>
        <dbReference type="ChEBI" id="CHEBI:132124"/>
        <dbReference type="ChEBI" id="CHEBI:134225"/>
    </reaction>
</comment>
<comment type="catalytic activity">
    <reaction evidence="1">
        <text>N,N-dimethyl-1,4-phenylenediamine + anthranilate + 2 NAD(+) = 2-(4-dimethylaminophenyl)diazenylbenzoate + 2 NADH + 2 H(+)</text>
        <dbReference type="Rhea" id="RHEA:55872"/>
        <dbReference type="ChEBI" id="CHEBI:15378"/>
        <dbReference type="ChEBI" id="CHEBI:15783"/>
        <dbReference type="ChEBI" id="CHEBI:16567"/>
        <dbReference type="ChEBI" id="CHEBI:57540"/>
        <dbReference type="ChEBI" id="CHEBI:57945"/>
        <dbReference type="ChEBI" id="CHEBI:71579"/>
        <dbReference type="EC" id="1.7.1.17"/>
    </reaction>
</comment>
<comment type="cofactor">
    <cofactor evidence="1">
        <name>FMN</name>
        <dbReference type="ChEBI" id="CHEBI:58210"/>
    </cofactor>
    <text evidence="1">Binds 1 FMN per subunit.</text>
</comment>
<comment type="subunit">
    <text evidence="1">Homodimer.</text>
</comment>
<comment type="similarity">
    <text evidence="1">Belongs to the azoreductase type 1 family.</text>
</comment>
<reference key="1">
    <citation type="journal article" date="2008" name="BMC Genomics">
        <title>Genomics of an extreme psychrophile, Psychromonas ingrahamii.</title>
        <authorList>
            <person name="Riley M."/>
            <person name="Staley J.T."/>
            <person name="Danchin A."/>
            <person name="Wang T.Z."/>
            <person name="Brettin T.S."/>
            <person name="Hauser L.J."/>
            <person name="Land M.L."/>
            <person name="Thompson L.S."/>
        </authorList>
    </citation>
    <scope>NUCLEOTIDE SEQUENCE [LARGE SCALE GENOMIC DNA]</scope>
    <source>
        <strain>DSM 17664 / CCUG 51855 / 37</strain>
    </source>
</reference>
<gene>
    <name evidence="1" type="primary">azoR</name>
    <name type="ordered locus">Ping_1242</name>
</gene>
<sequence>MINFLALKSSILGDYSSSSKLIDELLAKYTPQQAIITEHDLAEQPLPVLDGEIAMAMRSPEQLNDKQRDALALSDKLISELVASDLLVIAAPMYNFMIPTQLKNWIDLVARAGKTFSYTEQGPQGLISGTRAIIVTTRGGMHKEQGTDQQVPYLKTVLNFMGISDIEVVYAESLAMGPETAELNLEQARKQLSVFTNDISTLNSQS</sequence>